<name>DARP_SHIBS</name>
<proteinExistence type="inferred from homology"/>
<protein>
    <recommendedName>
        <fullName evidence="1">Dual-action ribosomal maturation protein DarP</fullName>
    </recommendedName>
    <alternativeName>
        <fullName evidence="1">Large ribosomal subunit assembly factor DarP</fullName>
    </alternativeName>
</protein>
<accession>Q31TH0</accession>
<organism>
    <name type="scientific">Shigella boydii serotype 4 (strain Sb227)</name>
    <dbReference type="NCBI Taxonomy" id="300268"/>
    <lineage>
        <taxon>Bacteria</taxon>
        <taxon>Pseudomonadati</taxon>
        <taxon>Pseudomonadota</taxon>
        <taxon>Gammaproteobacteria</taxon>
        <taxon>Enterobacterales</taxon>
        <taxon>Enterobacteriaceae</taxon>
        <taxon>Shigella</taxon>
    </lineage>
</organism>
<comment type="function">
    <text evidence="1">Member of a network of 50S ribosomal subunit biogenesis factors which assembles along the 30S-50S interface, preventing incorrect 23S rRNA structures from forming. Promotes peptidyl transferase center (PTC) maturation.</text>
</comment>
<comment type="subcellular location">
    <subcellularLocation>
        <location evidence="1">Cytoplasm</location>
    </subcellularLocation>
    <text evidence="1">Associates with late stage pre-50S ribosomal subunits.</text>
</comment>
<comment type="similarity">
    <text evidence="1">Belongs to the DarP family.</text>
</comment>
<gene>
    <name evidence="1" type="primary">darP</name>
    <name type="ordered locus">SBO_4212</name>
</gene>
<reference key="1">
    <citation type="journal article" date="2005" name="Nucleic Acids Res.">
        <title>Genome dynamics and diversity of Shigella species, the etiologic agents of bacillary dysentery.</title>
        <authorList>
            <person name="Yang F."/>
            <person name="Yang J."/>
            <person name="Zhang X."/>
            <person name="Chen L."/>
            <person name="Jiang Y."/>
            <person name="Yan Y."/>
            <person name="Tang X."/>
            <person name="Wang J."/>
            <person name="Xiong Z."/>
            <person name="Dong J."/>
            <person name="Xue Y."/>
            <person name="Zhu Y."/>
            <person name="Xu X."/>
            <person name="Sun L."/>
            <person name="Chen S."/>
            <person name="Nie H."/>
            <person name="Peng J."/>
            <person name="Xu J."/>
            <person name="Wang Y."/>
            <person name="Yuan Z."/>
            <person name="Wen Y."/>
            <person name="Yao Z."/>
            <person name="Shen Y."/>
            <person name="Qiang B."/>
            <person name="Hou Y."/>
            <person name="Yu J."/>
            <person name="Jin Q."/>
        </authorList>
    </citation>
    <scope>NUCLEOTIDE SEQUENCE [LARGE SCALE GENOMIC DNA]</scope>
    <source>
        <strain>Sb227</strain>
    </source>
</reference>
<sequence>MTKQPEDWLDDVPGDDIEDEDDEIIWVSKSEIKRDAEELKRLGAEIVDLGKNALDKIPLDADLRAAIELAQRIKMEGRRRQLQLIGKMLRQRDVEPIRQALDKLKNRHNQQVVLFHKLENLRDRLIDQGDDAIAEVLNLWPDADRQQLRTLIRNAKKEKEGNKPPKSARQIFQYLRELAENEE</sequence>
<keyword id="KW-0963">Cytoplasm</keyword>
<keyword id="KW-0690">Ribosome biogenesis</keyword>
<keyword id="KW-0694">RNA-binding</keyword>
<keyword id="KW-0699">rRNA-binding</keyword>
<evidence type="ECO:0000255" key="1">
    <source>
        <dbReference type="HAMAP-Rule" id="MF_00765"/>
    </source>
</evidence>
<feature type="chain" id="PRO_0000257640" description="Dual-action ribosomal maturation protein DarP">
    <location>
        <begin position="1"/>
        <end position="183"/>
    </location>
</feature>
<dbReference type="EMBL" id="CP000036">
    <property type="protein sequence ID" value="ABB68638.1"/>
    <property type="molecule type" value="Genomic_DNA"/>
</dbReference>
<dbReference type="SMR" id="Q31TH0"/>
<dbReference type="KEGG" id="sbo:SBO_4212"/>
<dbReference type="HOGENOM" id="CLU_106757_2_0_6"/>
<dbReference type="Proteomes" id="UP000007067">
    <property type="component" value="Chromosome"/>
</dbReference>
<dbReference type="GO" id="GO:0005829">
    <property type="term" value="C:cytosol"/>
    <property type="evidence" value="ECO:0007669"/>
    <property type="project" value="TreeGrafter"/>
</dbReference>
<dbReference type="GO" id="GO:0043022">
    <property type="term" value="F:ribosome binding"/>
    <property type="evidence" value="ECO:0007669"/>
    <property type="project" value="UniProtKB-UniRule"/>
</dbReference>
<dbReference type="GO" id="GO:0019843">
    <property type="term" value="F:rRNA binding"/>
    <property type="evidence" value="ECO:0007669"/>
    <property type="project" value="UniProtKB-UniRule"/>
</dbReference>
<dbReference type="GO" id="GO:1902626">
    <property type="term" value="P:assembly of large subunit precursor of preribosome"/>
    <property type="evidence" value="ECO:0007669"/>
    <property type="project" value="UniProtKB-UniRule"/>
</dbReference>
<dbReference type="CDD" id="cd16331">
    <property type="entry name" value="YjgA-like"/>
    <property type="match status" value="1"/>
</dbReference>
<dbReference type="FunFam" id="1.10.60.30:FF:000001">
    <property type="entry name" value="UPF0307 protein YjgA"/>
    <property type="match status" value="1"/>
</dbReference>
<dbReference type="FunFam" id="1.10.60.30:FF:000002">
    <property type="entry name" value="UPF0307 protein YjgA"/>
    <property type="match status" value="1"/>
</dbReference>
<dbReference type="Gene3D" id="1.10.60.30">
    <property type="entry name" value="PSPTO4464-like domains"/>
    <property type="match status" value="2"/>
</dbReference>
<dbReference type="HAMAP" id="MF_00765">
    <property type="entry name" value="DarP"/>
    <property type="match status" value="1"/>
</dbReference>
<dbReference type="InterPro" id="IPR006839">
    <property type="entry name" value="DarP"/>
</dbReference>
<dbReference type="InterPro" id="IPR023153">
    <property type="entry name" value="DarP_sf"/>
</dbReference>
<dbReference type="NCBIfam" id="NF003593">
    <property type="entry name" value="PRK05255.1-1"/>
    <property type="match status" value="1"/>
</dbReference>
<dbReference type="PANTHER" id="PTHR38101">
    <property type="entry name" value="UPF0307 PROTEIN YJGA"/>
    <property type="match status" value="1"/>
</dbReference>
<dbReference type="PANTHER" id="PTHR38101:SF1">
    <property type="entry name" value="UPF0307 PROTEIN YJGA"/>
    <property type="match status" value="1"/>
</dbReference>
<dbReference type="Pfam" id="PF04751">
    <property type="entry name" value="DarP"/>
    <property type="match status" value="1"/>
</dbReference>
<dbReference type="PIRSF" id="PIRSF016183">
    <property type="entry name" value="UCP016183"/>
    <property type="match status" value="1"/>
</dbReference>
<dbReference type="SUPFAM" id="SSF158710">
    <property type="entry name" value="PSPTO4464-like"/>
    <property type="match status" value="1"/>
</dbReference>